<name>PCH2_CHICK</name>
<organism>
    <name type="scientific">Gallus gallus</name>
    <name type="common">Chicken</name>
    <dbReference type="NCBI Taxonomy" id="9031"/>
    <lineage>
        <taxon>Eukaryota</taxon>
        <taxon>Metazoa</taxon>
        <taxon>Chordata</taxon>
        <taxon>Craniata</taxon>
        <taxon>Vertebrata</taxon>
        <taxon>Euteleostomi</taxon>
        <taxon>Archelosauria</taxon>
        <taxon>Archosauria</taxon>
        <taxon>Dinosauria</taxon>
        <taxon>Saurischia</taxon>
        <taxon>Theropoda</taxon>
        <taxon>Coelurosauria</taxon>
        <taxon>Aves</taxon>
        <taxon>Neognathae</taxon>
        <taxon>Galloanserae</taxon>
        <taxon>Galliformes</taxon>
        <taxon>Phasianidae</taxon>
        <taxon>Phasianinae</taxon>
        <taxon>Gallus</taxon>
    </lineage>
</organism>
<comment type="function">
    <text evidence="1">Plays a key role in chromosome recombination and chromosome structure development during meiosis. Required at early steps in meiotic recombination that leads to non-crossovers pathways. Also needed for efficient completion of homologous synapsis by influencing crossover distribution along the chromosomes affecting both crossovers and non-crossovers pathways (By similarity).</text>
</comment>
<comment type="similarity">
    <text evidence="3">Belongs to the AAA ATPase family. PCH2 subfamily.</text>
</comment>
<proteinExistence type="inferred from homology"/>
<protein>
    <recommendedName>
        <fullName>Pachytene checkpoint protein 2 homolog</fullName>
    </recommendedName>
    <alternativeName>
        <fullName>Thyroid hormone receptor interactor 13 homolog</fullName>
    </alternativeName>
    <alternativeName>
        <fullName>Thyroid receptor-interacting protein 13 homolog</fullName>
        <shortName>TR-interacting protein 13 homolog</shortName>
        <shortName>TRIP-13 homolog</shortName>
    </alternativeName>
</protein>
<feature type="chain" id="PRO_0000410923" description="Pachytene checkpoint protein 2 homolog">
    <location>
        <begin position="1"/>
        <end position="432"/>
    </location>
</feature>
<feature type="binding site" evidence="2">
    <location>
        <begin position="179"/>
        <end position="186"/>
    </location>
    <ligand>
        <name>ATP</name>
        <dbReference type="ChEBI" id="CHEBI:30616"/>
    </ligand>
</feature>
<keyword id="KW-0067">ATP-binding</keyword>
<keyword id="KW-0221">Differentiation</keyword>
<keyword id="KW-0469">Meiosis</keyword>
<keyword id="KW-0547">Nucleotide-binding</keyword>
<keyword id="KW-0896">Oogenesis</keyword>
<keyword id="KW-1185">Reference proteome</keyword>
<keyword id="KW-0744">Spermatogenesis</keyword>
<accession>E1C6Q1</accession>
<dbReference type="EMBL" id="AADN02027348">
    <property type="status" value="NOT_ANNOTATED_CDS"/>
    <property type="molecule type" value="Genomic_DNA"/>
</dbReference>
<dbReference type="RefSeq" id="NP_001291984.1">
    <property type="nucleotide sequence ID" value="NM_001305055.2"/>
</dbReference>
<dbReference type="RefSeq" id="NP_001291985.1">
    <property type="nucleotide sequence ID" value="NM_001305056.2"/>
</dbReference>
<dbReference type="SMR" id="E1C6Q1"/>
<dbReference type="FunCoup" id="E1C6Q1">
    <property type="interactions" value="1677"/>
</dbReference>
<dbReference type="STRING" id="9031.ENSGALP00000064487"/>
<dbReference type="PaxDb" id="9031-ENSGALP00000020406"/>
<dbReference type="GeneID" id="420798"/>
<dbReference type="KEGG" id="gga:420798"/>
<dbReference type="CTD" id="9319"/>
<dbReference type="VEuPathDB" id="HostDB:geneid_420798"/>
<dbReference type="eggNOG" id="KOG0744">
    <property type="taxonomic scope" value="Eukaryota"/>
</dbReference>
<dbReference type="HOGENOM" id="CLU_028208_0_1_1"/>
<dbReference type="InParanoid" id="E1C6Q1"/>
<dbReference type="OMA" id="NVCDSVQ"/>
<dbReference type="OrthoDB" id="10042665at2759"/>
<dbReference type="PhylomeDB" id="E1C6Q1"/>
<dbReference type="TreeFam" id="TF313507"/>
<dbReference type="PRO" id="PR:E1C6Q1"/>
<dbReference type="Proteomes" id="UP000000539">
    <property type="component" value="Chromosome 2"/>
</dbReference>
<dbReference type="Bgee" id="ENSGALG00000033834">
    <property type="expression patterns" value="Expressed in spermatid and 11 other cell types or tissues"/>
</dbReference>
<dbReference type="GO" id="GO:0005694">
    <property type="term" value="C:chromosome"/>
    <property type="evidence" value="ECO:0000318"/>
    <property type="project" value="GO_Central"/>
</dbReference>
<dbReference type="GO" id="GO:0005634">
    <property type="term" value="C:nucleus"/>
    <property type="evidence" value="ECO:0000318"/>
    <property type="project" value="GO_Central"/>
</dbReference>
<dbReference type="GO" id="GO:0005524">
    <property type="term" value="F:ATP binding"/>
    <property type="evidence" value="ECO:0007669"/>
    <property type="project" value="UniProtKB-KW"/>
</dbReference>
<dbReference type="GO" id="GO:0016887">
    <property type="term" value="F:ATP hydrolysis activity"/>
    <property type="evidence" value="ECO:0007669"/>
    <property type="project" value="InterPro"/>
</dbReference>
<dbReference type="GO" id="GO:0006302">
    <property type="term" value="P:double-strand break repair"/>
    <property type="evidence" value="ECO:0000250"/>
    <property type="project" value="UniProtKB"/>
</dbReference>
<dbReference type="GO" id="GO:0051598">
    <property type="term" value="P:meiotic recombination checkpoint signaling"/>
    <property type="evidence" value="ECO:0000318"/>
    <property type="project" value="GO_Central"/>
</dbReference>
<dbReference type="GO" id="GO:0048477">
    <property type="term" value="P:oogenesis"/>
    <property type="evidence" value="ECO:0000250"/>
    <property type="project" value="UniProtKB"/>
</dbReference>
<dbReference type="GO" id="GO:0007131">
    <property type="term" value="P:reciprocal meiotic recombination"/>
    <property type="evidence" value="ECO:0000250"/>
    <property type="project" value="UniProtKB"/>
</dbReference>
<dbReference type="GO" id="GO:0007283">
    <property type="term" value="P:spermatogenesis"/>
    <property type="evidence" value="ECO:0000250"/>
    <property type="project" value="UniProtKB"/>
</dbReference>
<dbReference type="GO" id="GO:0007130">
    <property type="term" value="P:synaptonemal complex assembly"/>
    <property type="evidence" value="ECO:0000250"/>
    <property type="project" value="UniProtKB"/>
</dbReference>
<dbReference type="CDD" id="cd19508">
    <property type="entry name" value="RecA-like_Pch2-like"/>
    <property type="match status" value="1"/>
</dbReference>
<dbReference type="FunFam" id="3.40.50.300:FF:000662">
    <property type="entry name" value="Pachytene checkpoint protein 2 homolog"/>
    <property type="match status" value="1"/>
</dbReference>
<dbReference type="Gene3D" id="3.40.50.300">
    <property type="entry name" value="P-loop containing nucleotide triphosphate hydrolases"/>
    <property type="match status" value="1"/>
</dbReference>
<dbReference type="InterPro" id="IPR003593">
    <property type="entry name" value="AAA+_ATPase"/>
</dbReference>
<dbReference type="InterPro" id="IPR003959">
    <property type="entry name" value="ATPase_AAA_core"/>
</dbReference>
<dbReference type="InterPro" id="IPR003960">
    <property type="entry name" value="ATPase_AAA_CS"/>
</dbReference>
<dbReference type="InterPro" id="IPR001270">
    <property type="entry name" value="ClpA/B"/>
</dbReference>
<dbReference type="InterPro" id="IPR027417">
    <property type="entry name" value="P-loop_NTPase"/>
</dbReference>
<dbReference type="InterPro" id="IPR044539">
    <property type="entry name" value="Pch2-like"/>
</dbReference>
<dbReference type="PANTHER" id="PTHR45991">
    <property type="entry name" value="PACHYTENE CHECKPOINT PROTEIN 2"/>
    <property type="match status" value="1"/>
</dbReference>
<dbReference type="PANTHER" id="PTHR45991:SF1">
    <property type="entry name" value="PACHYTENE CHECKPOINT PROTEIN 2 HOMOLOG"/>
    <property type="match status" value="1"/>
</dbReference>
<dbReference type="Pfam" id="PF00004">
    <property type="entry name" value="AAA"/>
    <property type="match status" value="1"/>
</dbReference>
<dbReference type="Pfam" id="PF23242">
    <property type="entry name" value="AAA_lid_TRIP13_C"/>
    <property type="match status" value="1"/>
</dbReference>
<dbReference type="Pfam" id="PF23563">
    <property type="entry name" value="TRIP13_N"/>
    <property type="match status" value="1"/>
</dbReference>
<dbReference type="PRINTS" id="PR00300">
    <property type="entry name" value="CLPPROTEASEA"/>
</dbReference>
<dbReference type="SMART" id="SM00382">
    <property type="entry name" value="AAA"/>
    <property type="match status" value="1"/>
</dbReference>
<dbReference type="SUPFAM" id="SSF52540">
    <property type="entry name" value="P-loop containing nucleoside triphosphate hydrolases"/>
    <property type="match status" value="1"/>
</dbReference>
<dbReference type="PROSITE" id="PS00674">
    <property type="entry name" value="AAA"/>
    <property type="match status" value="1"/>
</dbReference>
<sequence>MDEAAGDLKQALPNTCDNVQIHVEVHQKSNSTAKKEDIRMSVLKLLNRHNIVFGDYKWTEFDDGFLNSNVQSVSIVDTELKLKERQPIDLSKSSLTIHIFHLNEEGPSIENLEEENEDIVAANHWVLPAAEFHGLWESLIYDTEVKSHLLDYVTTTLLFSDRNVDSNLISWNRVVLLHGPPGTGKTSLCKALAQKLTIRLSYRYRYGQLIEINSHSLFSKWFSESGKLVTKMFQKIQELIDDKDALVFVLIDEVESLTAARSAFKAGTEPSDAIRVVNAVLMQIDQIKRYPNVVILTTSNITEKIDMAFVDRADIKQYIGPPSAAAIFRIYLSCLEELMKCQIIYPRQHLLSLRELEMIGFVENNVSRLSLVLKEISRRSEGLSGRVLRKLPFLAHALYIQSPSVTMTAFLQALSLVVDKQFEERKKLADCV</sequence>
<gene>
    <name type="primary">TRIP13</name>
    <name type="synonym">PCH2</name>
</gene>
<evidence type="ECO:0000250" key="1">
    <source>
        <dbReference type="UniProtKB" id="Q3UA06"/>
    </source>
</evidence>
<evidence type="ECO:0000255" key="2"/>
<evidence type="ECO:0000305" key="3"/>
<reference key="1">
    <citation type="journal article" date="2004" name="Nature">
        <title>Sequence and comparative analysis of the chicken genome provide unique perspectives on vertebrate evolution.</title>
        <authorList>
            <person name="Hillier L.W."/>
            <person name="Miller W."/>
            <person name="Birney E."/>
            <person name="Warren W."/>
            <person name="Hardison R.C."/>
            <person name="Ponting C.P."/>
            <person name="Bork P."/>
            <person name="Burt D.W."/>
            <person name="Groenen M.A.M."/>
            <person name="Delany M.E."/>
            <person name="Dodgson J.B."/>
            <person name="Chinwalla A.T."/>
            <person name="Cliften P.F."/>
            <person name="Clifton S.W."/>
            <person name="Delehaunty K.D."/>
            <person name="Fronick C."/>
            <person name="Fulton R.S."/>
            <person name="Graves T.A."/>
            <person name="Kremitzki C."/>
            <person name="Layman D."/>
            <person name="Magrini V."/>
            <person name="McPherson J.D."/>
            <person name="Miner T.L."/>
            <person name="Minx P."/>
            <person name="Nash W.E."/>
            <person name="Nhan M.N."/>
            <person name="Nelson J.O."/>
            <person name="Oddy L.G."/>
            <person name="Pohl C.S."/>
            <person name="Randall-Maher J."/>
            <person name="Smith S.M."/>
            <person name="Wallis J.W."/>
            <person name="Yang S.-P."/>
            <person name="Romanov M.N."/>
            <person name="Rondelli C.M."/>
            <person name="Paton B."/>
            <person name="Smith J."/>
            <person name="Morrice D."/>
            <person name="Daniels L."/>
            <person name="Tempest H.G."/>
            <person name="Robertson L."/>
            <person name="Masabanda J.S."/>
            <person name="Griffin D.K."/>
            <person name="Vignal A."/>
            <person name="Fillon V."/>
            <person name="Jacobbson L."/>
            <person name="Kerje S."/>
            <person name="Andersson L."/>
            <person name="Crooijmans R.P."/>
            <person name="Aerts J."/>
            <person name="van der Poel J.J."/>
            <person name="Ellegren H."/>
            <person name="Caldwell R.B."/>
            <person name="Hubbard S.J."/>
            <person name="Grafham D.V."/>
            <person name="Kierzek A.M."/>
            <person name="McLaren S.R."/>
            <person name="Overton I.M."/>
            <person name="Arakawa H."/>
            <person name="Beattie K.J."/>
            <person name="Bezzubov Y."/>
            <person name="Boardman P.E."/>
            <person name="Bonfield J.K."/>
            <person name="Croning M.D.R."/>
            <person name="Davies R.M."/>
            <person name="Francis M.D."/>
            <person name="Humphray S.J."/>
            <person name="Scott C.E."/>
            <person name="Taylor R.G."/>
            <person name="Tickle C."/>
            <person name="Brown W.R.A."/>
            <person name="Rogers J."/>
            <person name="Buerstedde J.-M."/>
            <person name="Wilson S.A."/>
            <person name="Stubbs L."/>
            <person name="Ovcharenko I."/>
            <person name="Gordon L."/>
            <person name="Lucas S."/>
            <person name="Miller M.M."/>
            <person name="Inoko H."/>
            <person name="Shiina T."/>
            <person name="Kaufman J."/>
            <person name="Salomonsen J."/>
            <person name="Skjoedt K."/>
            <person name="Wong G.K.-S."/>
            <person name="Wang J."/>
            <person name="Liu B."/>
            <person name="Wang J."/>
            <person name="Yu J."/>
            <person name="Yang H."/>
            <person name="Nefedov M."/>
            <person name="Koriabine M."/>
            <person name="Dejong P.J."/>
            <person name="Goodstadt L."/>
            <person name="Webber C."/>
            <person name="Dickens N.J."/>
            <person name="Letunic I."/>
            <person name="Suyama M."/>
            <person name="Torrents D."/>
            <person name="von Mering C."/>
            <person name="Zdobnov E.M."/>
            <person name="Makova K."/>
            <person name="Nekrutenko A."/>
            <person name="Elnitski L."/>
            <person name="Eswara P."/>
            <person name="King D.C."/>
            <person name="Yang S.-P."/>
            <person name="Tyekucheva S."/>
            <person name="Radakrishnan A."/>
            <person name="Harris R.S."/>
            <person name="Chiaromonte F."/>
            <person name="Taylor J."/>
            <person name="He J."/>
            <person name="Rijnkels M."/>
            <person name="Griffiths-Jones S."/>
            <person name="Ureta-Vidal A."/>
            <person name="Hoffman M.M."/>
            <person name="Severin J."/>
            <person name="Searle S.M.J."/>
            <person name="Law A.S."/>
            <person name="Speed D."/>
            <person name="Waddington D."/>
            <person name="Cheng Z."/>
            <person name="Tuzun E."/>
            <person name="Eichler E."/>
            <person name="Bao Z."/>
            <person name="Flicek P."/>
            <person name="Shteynberg D.D."/>
            <person name="Brent M.R."/>
            <person name="Bye J.M."/>
            <person name="Huckle E.J."/>
            <person name="Chatterji S."/>
            <person name="Dewey C."/>
            <person name="Pachter L."/>
            <person name="Kouranov A."/>
            <person name="Mourelatos Z."/>
            <person name="Hatzigeorgiou A.G."/>
            <person name="Paterson A.H."/>
            <person name="Ivarie R."/>
            <person name="Brandstrom M."/>
            <person name="Axelsson E."/>
            <person name="Backstrom N."/>
            <person name="Berlin S."/>
            <person name="Webster M.T."/>
            <person name="Pourquie O."/>
            <person name="Reymond A."/>
            <person name="Ucla C."/>
            <person name="Antonarakis S.E."/>
            <person name="Long M."/>
            <person name="Emerson J.J."/>
            <person name="Betran E."/>
            <person name="Dupanloup I."/>
            <person name="Kaessmann H."/>
            <person name="Hinrichs A.S."/>
            <person name="Bejerano G."/>
            <person name="Furey T.S."/>
            <person name="Harte R.A."/>
            <person name="Raney B."/>
            <person name="Siepel A."/>
            <person name="Kent W.J."/>
            <person name="Haussler D."/>
            <person name="Eyras E."/>
            <person name="Castelo R."/>
            <person name="Abril J.F."/>
            <person name="Castellano S."/>
            <person name="Camara F."/>
            <person name="Parra G."/>
            <person name="Guigo R."/>
            <person name="Bourque G."/>
            <person name="Tesler G."/>
            <person name="Pevzner P.A."/>
            <person name="Smit A."/>
            <person name="Fulton L.A."/>
            <person name="Mardis E.R."/>
            <person name="Wilson R.K."/>
        </authorList>
    </citation>
    <scope>NUCLEOTIDE SEQUENCE [LARGE SCALE GENOMIC DNA]</scope>
    <source>
        <strain>Red jungle fowl</strain>
    </source>
</reference>